<accession>Q97SJ8</accession>
<protein>
    <recommendedName>
        <fullName evidence="1">UPF0371 protein SP_0341</fullName>
    </recommendedName>
</protein>
<evidence type="ECO:0000255" key="1">
    <source>
        <dbReference type="HAMAP-Rule" id="MF_01567"/>
    </source>
</evidence>
<name>Y341_STRPN</name>
<comment type="similarity">
    <text evidence="1">Belongs to the UPF0371 family.</text>
</comment>
<gene>
    <name type="ordered locus">SP_0341</name>
</gene>
<organism>
    <name type="scientific">Streptococcus pneumoniae serotype 4 (strain ATCC BAA-334 / TIGR4)</name>
    <dbReference type="NCBI Taxonomy" id="170187"/>
    <lineage>
        <taxon>Bacteria</taxon>
        <taxon>Bacillati</taxon>
        <taxon>Bacillota</taxon>
        <taxon>Bacilli</taxon>
        <taxon>Lactobacillales</taxon>
        <taxon>Streptococcaceae</taxon>
        <taxon>Streptococcus</taxon>
    </lineage>
</organism>
<dbReference type="EMBL" id="AE005672">
    <property type="protein sequence ID" value="AAK74515.1"/>
    <property type="molecule type" value="Genomic_DNA"/>
</dbReference>
<dbReference type="PIR" id="B95040">
    <property type="entry name" value="B95040"/>
</dbReference>
<dbReference type="RefSeq" id="WP_000743611.1">
    <property type="nucleotide sequence ID" value="NZ_CP155539.1"/>
</dbReference>
<dbReference type="SMR" id="Q97SJ8"/>
<dbReference type="PaxDb" id="170187-SP_0341"/>
<dbReference type="EnsemblBacteria" id="AAK74515">
    <property type="protein sequence ID" value="AAK74515"/>
    <property type="gene ID" value="SP_0341"/>
</dbReference>
<dbReference type="KEGG" id="spn:SP_0341"/>
<dbReference type="eggNOG" id="COG4868">
    <property type="taxonomic scope" value="Bacteria"/>
</dbReference>
<dbReference type="PhylomeDB" id="Q97SJ8"/>
<dbReference type="BioCyc" id="SPNE170187:G1FZB-350-MONOMER"/>
<dbReference type="Proteomes" id="UP000000585">
    <property type="component" value="Chromosome"/>
</dbReference>
<dbReference type="Gene3D" id="1.20.1570.10">
    <property type="entry name" value="dip2346 domain like"/>
    <property type="match status" value="1"/>
</dbReference>
<dbReference type="Gene3D" id="3.10.630.10">
    <property type="entry name" value="dip2346 domain like"/>
    <property type="match status" value="1"/>
</dbReference>
<dbReference type="Gene3D" id="3.40.140.40">
    <property type="entry name" value="Domain of unknown function (DUF1846), C-terminal subdomain"/>
    <property type="match status" value="1"/>
</dbReference>
<dbReference type="HAMAP" id="MF_01567">
    <property type="entry name" value="UPF0371"/>
    <property type="match status" value="1"/>
</dbReference>
<dbReference type="InterPro" id="IPR014999">
    <property type="entry name" value="DUF1846"/>
</dbReference>
<dbReference type="InterPro" id="IPR048441">
    <property type="entry name" value="DUF1846_C"/>
</dbReference>
<dbReference type="InterPro" id="IPR048496">
    <property type="entry name" value="DUF1846_N"/>
</dbReference>
<dbReference type="NCBIfam" id="NF010184">
    <property type="entry name" value="PRK13663.1"/>
    <property type="match status" value="1"/>
</dbReference>
<dbReference type="Pfam" id="PF08903">
    <property type="entry name" value="DUF1846"/>
    <property type="match status" value="1"/>
</dbReference>
<dbReference type="Pfam" id="PF20921">
    <property type="entry name" value="DUF1846_C"/>
    <property type="match status" value="1"/>
</dbReference>
<dbReference type="PIRSF" id="PIRSF033132">
    <property type="entry name" value="DUF1846"/>
    <property type="match status" value="1"/>
</dbReference>
<feature type="chain" id="PRO_0000245625" description="UPF0371 protein SP_0341">
    <location>
        <begin position="1"/>
        <end position="494"/>
    </location>
</feature>
<keyword id="KW-1185">Reference proteome</keyword>
<sequence length="494" mass="55065">MKKQAFSSEQYLNLQRDHILERINQFDGKLYLEFGGKMLEDFHAARVLPGYEPDNKIKLLQELKEQVEVVIAINASNIEHSKARGDLGISYDQEVLRLIDKFNELGIFVGSVVITQYAGQPAADAFRNQLEKNGIDSYLHYPIKGYPTDMDHIISPEGMGKNDYIKTSRNLIVVTAPGPGSGKLATCMSNMYHDQINGIKSGYAKFETFPVWNLPLHHPVNLAYEAATADLDDVNMIDPFHLQTYGETTVNYNRDIEIFPVLKRMLERILGKSPYASPTDMGVNMVGFAITDDEAAVEASKQEIIRRYYQTVLDFKAEKVGEAAVKKIELLMNDLGITPADRKVAVVARQKAEETGGPALAFELPNGEIITGKNSELFGPTAAALINAIKKSADIAKEVKLIEPEVVKPIQGLKIDHLGSRNPRLHSNEILIALAITATENPDAARAMEELGNLKGSEAHSTIILTDEDKNVLRKLGINVTFDPYYQYDRLYRK</sequence>
<proteinExistence type="inferred from homology"/>
<reference key="1">
    <citation type="journal article" date="2001" name="Science">
        <title>Complete genome sequence of a virulent isolate of Streptococcus pneumoniae.</title>
        <authorList>
            <person name="Tettelin H."/>
            <person name="Nelson K.E."/>
            <person name="Paulsen I.T."/>
            <person name="Eisen J.A."/>
            <person name="Read T.D."/>
            <person name="Peterson S.N."/>
            <person name="Heidelberg J.F."/>
            <person name="DeBoy R.T."/>
            <person name="Haft D.H."/>
            <person name="Dodson R.J."/>
            <person name="Durkin A.S."/>
            <person name="Gwinn M.L."/>
            <person name="Kolonay J.F."/>
            <person name="Nelson W.C."/>
            <person name="Peterson J.D."/>
            <person name="Umayam L.A."/>
            <person name="White O."/>
            <person name="Salzberg S.L."/>
            <person name="Lewis M.R."/>
            <person name="Radune D."/>
            <person name="Holtzapple E.K."/>
            <person name="Khouri H.M."/>
            <person name="Wolf A.M."/>
            <person name="Utterback T.R."/>
            <person name="Hansen C.L."/>
            <person name="McDonald L.A."/>
            <person name="Feldblyum T.V."/>
            <person name="Angiuoli S.V."/>
            <person name="Dickinson T."/>
            <person name="Hickey E.K."/>
            <person name="Holt I.E."/>
            <person name="Loftus B.J."/>
            <person name="Yang F."/>
            <person name="Smith H.O."/>
            <person name="Venter J.C."/>
            <person name="Dougherty B.A."/>
            <person name="Morrison D.A."/>
            <person name="Hollingshead S.K."/>
            <person name="Fraser C.M."/>
        </authorList>
    </citation>
    <scope>NUCLEOTIDE SEQUENCE [LARGE SCALE GENOMIC DNA]</scope>
    <source>
        <strain>ATCC BAA-334 / TIGR4</strain>
    </source>
</reference>